<name>THIG_ERWT9</name>
<keyword id="KW-0963">Cytoplasm</keyword>
<keyword id="KW-1185">Reference proteome</keyword>
<keyword id="KW-0704">Schiff base</keyword>
<keyword id="KW-0784">Thiamine biosynthesis</keyword>
<keyword id="KW-0808">Transferase</keyword>
<feature type="chain" id="PRO_1000196853" description="Thiazole synthase">
    <location>
        <begin position="1"/>
        <end position="256"/>
    </location>
</feature>
<feature type="active site" description="Schiff-base intermediate with DXP" evidence="1">
    <location>
        <position position="91"/>
    </location>
</feature>
<feature type="binding site" evidence="1">
    <location>
        <position position="152"/>
    </location>
    <ligand>
        <name>1-deoxy-D-xylulose 5-phosphate</name>
        <dbReference type="ChEBI" id="CHEBI:57792"/>
    </ligand>
</feature>
<feature type="binding site" evidence="1">
    <location>
        <begin position="179"/>
        <end position="180"/>
    </location>
    <ligand>
        <name>1-deoxy-D-xylulose 5-phosphate</name>
        <dbReference type="ChEBI" id="CHEBI:57792"/>
    </ligand>
</feature>
<feature type="binding site" evidence="1">
    <location>
        <begin position="201"/>
        <end position="202"/>
    </location>
    <ligand>
        <name>1-deoxy-D-xylulose 5-phosphate</name>
        <dbReference type="ChEBI" id="CHEBI:57792"/>
    </ligand>
</feature>
<accession>B2VD79</accession>
<gene>
    <name evidence="1" type="primary">thiG</name>
    <name type="ordered locus">ETA_07730</name>
</gene>
<reference key="1">
    <citation type="journal article" date="2008" name="Environ. Microbiol.">
        <title>The genome of Erwinia tasmaniensis strain Et1/99, a non-pathogenic bacterium in the genus Erwinia.</title>
        <authorList>
            <person name="Kube M."/>
            <person name="Migdoll A.M."/>
            <person name="Mueller I."/>
            <person name="Kuhl H."/>
            <person name="Beck A."/>
            <person name="Reinhardt R."/>
            <person name="Geider K."/>
        </authorList>
    </citation>
    <scope>NUCLEOTIDE SEQUENCE [LARGE SCALE GENOMIC DNA]</scope>
    <source>
        <strain>DSM 17950 / CFBP 7177 / CIP 109463 / NCPPB 4357 / Et1/99</strain>
    </source>
</reference>
<organism>
    <name type="scientific">Erwinia tasmaniensis (strain DSM 17950 / CFBP 7177 / CIP 109463 / NCPPB 4357 / Et1/99)</name>
    <dbReference type="NCBI Taxonomy" id="465817"/>
    <lineage>
        <taxon>Bacteria</taxon>
        <taxon>Pseudomonadati</taxon>
        <taxon>Pseudomonadota</taxon>
        <taxon>Gammaproteobacteria</taxon>
        <taxon>Enterobacterales</taxon>
        <taxon>Erwiniaceae</taxon>
        <taxon>Erwinia</taxon>
    </lineage>
</organism>
<sequence>MFYDFVPQSRFLLGTAGYPSPQILQQAAEASKSEIITVSLRREGGQGGAFRELLTQLNKRILPNTAGCHTVKEAVTTAHMARELFNTRWIKLEVIGHADTLQPDPFALVEAARILCADGFQVFPYTTEDLILGEKLLEAGCELLMPWGAPIGSGQGLRNIEGLRSMRSWFKDIPLIIDAGIGSPSQAALAMEMGFDAILLNTAVAKAQDPRRMAQAFAAAIRAGYDARGAGLIERRDMATASTPIFGMAQFSSQEW</sequence>
<evidence type="ECO:0000255" key="1">
    <source>
        <dbReference type="HAMAP-Rule" id="MF_00443"/>
    </source>
</evidence>
<protein>
    <recommendedName>
        <fullName evidence="1">Thiazole synthase</fullName>
        <ecNumber evidence="1">2.8.1.10</ecNumber>
    </recommendedName>
</protein>
<comment type="function">
    <text evidence="1">Catalyzes the rearrangement of 1-deoxy-D-xylulose 5-phosphate (DXP) to produce the thiazole phosphate moiety of thiamine. Sulfur is provided by the thiocarboxylate moiety of the carrier protein ThiS. In vitro, sulfur can be provided by H(2)S.</text>
</comment>
<comment type="catalytic activity">
    <reaction evidence="1">
        <text>[ThiS sulfur-carrier protein]-C-terminal-Gly-aminoethanethioate + 2-iminoacetate + 1-deoxy-D-xylulose 5-phosphate = [ThiS sulfur-carrier protein]-C-terminal Gly-Gly + 2-[(2R,5Z)-2-carboxy-4-methylthiazol-5(2H)-ylidene]ethyl phosphate + 2 H2O + H(+)</text>
        <dbReference type="Rhea" id="RHEA:26297"/>
        <dbReference type="Rhea" id="RHEA-COMP:12909"/>
        <dbReference type="Rhea" id="RHEA-COMP:19908"/>
        <dbReference type="ChEBI" id="CHEBI:15377"/>
        <dbReference type="ChEBI" id="CHEBI:15378"/>
        <dbReference type="ChEBI" id="CHEBI:57792"/>
        <dbReference type="ChEBI" id="CHEBI:62899"/>
        <dbReference type="ChEBI" id="CHEBI:77846"/>
        <dbReference type="ChEBI" id="CHEBI:90778"/>
        <dbReference type="ChEBI" id="CHEBI:232372"/>
        <dbReference type="EC" id="2.8.1.10"/>
    </reaction>
</comment>
<comment type="pathway">
    <text evidence="1">Cofactor biosynthesis; thiamine diphosphate biosynthesis.</text>
</comment>
<comment type="subunit">
    <text evidence="1">Homotetramer. Forms heterodimers with either ThiH or ThiS.</text>
</comment>
<comment type="subcellular location">
    <subcellularLocation>
        <location evidence="1">Cytoplasm</location>
    </subcellularLocation>
</comment>
<comment type="similarity">
    <text evidence="1">Belongs to the ThiG family.</text>
</comment>
<proteinExistence type="inferred from homology"/>
<dbReference type="EC" id="2.8.1.10" evidence="1"/>
<dbReference type="EMBL" id="CU468135">
    <property type="protein sequence ID" value="CAO95819.1"/>
    <property type="molecule type" value="Genomic_DNA"/>
</dbReference>
<dbReference type="RefSeq" id="WP_012440521.1">
    <property type="nucleotide sequence ID" value="NC_010694.1"/>
</dbReference>
<dbReference type="SMR" id="B2VD79"/>
<dbReference type="STRING" id="465817.ETA_07730"/>
<dbReference type="KEGG" id="eta:ETA_07730"/>
<dbReference type="eggNOG" id="COG2022">
    <property type="taxonomic scope" value="Bacteria"/>
</dbReference>
<dbReference type="HOGENOM" id="CLU_062233_1_0_6"/>
<dbReference type="OrthoDB" id="9805935at2"/>
<dbReference type="UniPathway" id="UPA00060"/>
<dbReference type="Proteomes" id="UP000001726">
    <property type="component" value="Chromosome"/>
</dbReference>
<dbReference type="GO" id="GO:0005737">
    <property type="term" value="C:cytoplasm"/>
    <property type="evidence" value="ECO:0007669"/>
    <property type="project" value="UniProtKB-SubCell"/>
</dbReference>
<dbReference type="GO" id="GO:1990107">
    <property type="term" value="F:thiazole synthase activity"/>
    <property type="evidence" value="ECO:0007669"/>
    <property type="project" value="UniProtKB-EC"/>
</dbReference>
<dbReference type="GO" id="GO:0009229">
    <property type="term" value="P:thiamine diphosphate biosynthetic process"/>
    <property type="evidence" value="ECO:0007669"/>
    <property type="project" value="UniProtKB-UniRule"/>
</dbReference>
<dbReference type="CDD" id="cd04728">
    <property type="entry name" value="ThiG"/>
    <property type="match status" value="1"/>
</dbReference>
<dbReference type="Gene3D" id="3.20.20.70">
    <property type="entry name" value="Aldolase class I"/>
    <property type="match status" value="1"/>
</dbReference>
<dbReference type="HAMAP" id="MF_00443">
    <property type="entry name" value="ThiG"/>
    <property type="match status" value="1"/>
</dbReference>
<dbReference type="InterPro" id="IPR013785">
    <property type="entry name" value="Aldolase_TIM"/>
</dbReference>
<dbReference type="InterPro" id="IPR033983">
    <property type="entry name" value="Thiazole_synthase_ThiG"/>
</dbReference>
<dbReference type="InterPro" id="IPR008867">
    <property type="entry name" value="ThiG"/>
</dbReference>
<dbReference type="PANTHER" id="PTHR34266">
    <property type="entry name" value="THIAZOLE SYNTHASE"/>
    <property type="match status" value="1"/>
</dbReference>
<dbReference type="PANTHER" id="PTHR34266:SF2">
    <property type="entry name" value="THIAZOLE SYNTHASE"/>
    <property type="match status" value="1"/>
</dbReference>
<dbReference type="Pfam" id="PF05690">
    <property type="entry name" value="ThiG"/>
    <property type="match status" value="1"/>
</dbReference>
<dbReference type="SUPFAM" id="SSF110399">
    <property type="entry name" value="ThiG-like"/>
    <property type="match status" value="1"/>
</dbReference>